<gene>
    <name evidence="1" type="primary">hisE</name>
    <name type="ordered locus">Pfl01_0383</name>
</gene>
<comment type="catalytic activity">
    <reaction evidence="1">
        <text>1-(5-phospho-beta-D-ribosyl)-ATP + H2O = 1-(5-phospho-beta-D-ribosyl)-5'-AMP + diphosphate + H(+)</text>
        <dbReference type="Rhea" id="RHEA:22828"/>
        <dbReference type="ChEBI" id="CHEBI:15377"/>
        <dbReference type="ChEBI" id="CHEBI:15378"/>
        <dbReference type="ChEBI" id="CHEBI:33019"/>
        <dbReference type="ChEBI" id="CHEBI:59457"/>
        <dbReference type="ChEBI" id="CHEBI:73183"/>
        <dbReference type="EC" id="3.6.1.31"/>
    </reaction>
</comment>
<comment type="pathway">
    <text evidence="1">Amino-acid biosynthesis; L-histidine biosynthesis; L-histidine from 5-phospho-alpha-D-ribose 1-diphosphate: step 2/9.</text>
</comment>
<comment type="subcellular location">
    <subcellularLocation>
        <location evidence="1">Cytoplasm</location>
    </subcellularLocation>
</comment>
<comment type="similarity">
    <text evidence="1">Belongs to the PRA-PH family.</text>
</comment>
<organism>
    <name type="scientific">Pseudomonas fluorescens (strain Pf0-1)</name>
    <dbReference type="NCBI Taxonomy" id="205922"/>
    <lineage>
        <taxon>Bacteria</taxon>
        <taxon>Pseudomonadati</taxon>
        <taxon>Pseudomonadota</taxon>
        <taxon>Gammaproteobacteria</taxon>
        <taxon>Pseudomonadales</taxon>
        <taxon>Pseudomonadaceae</taxon>
        <taxon>Pseudomonas</taxon>
    </lineage>
</organism>
<name>HIS2_PSEPF</name>
<keyword id="KW-0028">Amino-acid biosynthesis</keyword>
<keyword id="KW-0067">ATP-binding</keyword>
<keyword id="KW-0963">Cytoplasm</keyword>
<keyword id="KW-0368">Histidine biosynthesis</keyword>
<keyword id="KW-0378">Hydrolase</keyword>
<keyword id="KW-0547">Nucleotide-binding</keyword>
<proteinExistence type="inferred from homology"/>
<dbReference type="EC" id="3.6.1.31" evidence="1"/>
<dbReference type="EMBL" id="CP000094">
    <property type="protein sequence ID" value="ABA72127.1"/>
    <property type="molecule type" value="Genomic_DNA"/>
</dbReference>
<dbReference type="RefSeq" id="WP_007952422.1">
    <property type="nucleotide sequence ID" value="NC_007492.2"/>
</dbReference>
<dbReference type="SMR" id="Q3KJC9"/>
<dbReference type="KEGG" id="pfo:Pfl01_0383"/>
<dbReference type="eggNOG" id="COG0140">
    <property type="taxonomic scope" value="Bacteria"/>
</dbReference>
<dbReference type="HOGENOM" id="CLU_123337_1_2_6"/>
<dbReference type="UniPathway" id="UPA00031">
    <property type="reaction ID" value="UER00007"/>
</dbReference>
<dbReference type="Proteomes" id="UP000002704">
    <property type="component" value="Chromosome"/>
</dbReference>
<dbReference type="GO" id="GO:0005737">
    <property type="term" value="C:cytoplasm"/>
    <property type="evidence" value="ECO:0007669"/>
    <property type="project" value="UniProtKB-SubCell"/>
</dbReference>
<dbReference type="GO" id="GO:0005524">
    <property type="term" value="F:ATP binding"/>
    <property type="evidence" value="ECO:0007669"/>
    <property type="project" value="UniProtKB-KW"/>
</dbReference>
<dbReference type="GO" id="GO:0004636">
    <property type="term" value="F:phosphoribosyl-ATP diphosphatase activity"/>
    <property type="evidence" value="ECO:0007669"/>
    <property type="project" value="UniProtKB-UniRule"/>
</dbReference>
<dbReference type="GO" id="GO:0000105">
    <property type="term" value="P:L-histidine biosynthetic process"/>
    <property type="evidence" value="ECO:0007669"/>
    <property type="project" value="UniProtKB-UniRule"/>
</dbReference>
<dbReference type="CDD" id="cd11534">
    <property type="entry name" value="NTP-PPase_HisIE_like"/>
    <property type="match status" value="1"/>
</dbReference>
<dbReference type="Gene3D" id="1.10.287.1080">
    <property type="entry name" value="MazG-like"/>
    <property type="match status" value="1"/>
</dbReference>
<dbReference type="HAMAP" id="MF_01020">
    <property type="entry name" value="HisE"/>
    <property type="match status" value="1"/>
</dbReference>
<dbReference type="InterPro" id="IPR008179">
    <property type="entry name" value="HisE"/>
</dbReference>
<dbReference type="InterPro" id="IPR021130">
    <property type="entry name" value="PRib-ATP_PPHydrolase-like"/>
</dbReference>
<dbReference type="NCBIfam" id="TIGR03188">
    <property type="entry name" value="histidine_hisI"/>
    <property type="match status" value="1"/>
</dbReference>
<dbReference type="NCBIfam" id="NF001611">
    <property type="entry name" value="PRK00400.1-3"/>
    <property type="match status" value="1"/>
</dbReference>
<dbReference type="PANTHER" id="PTHR42945">
    <property type="entry name" value="HISTIDINE BIOSYNTHESIS BIFUNCTIONAL PROTEIN"/>
    <property type="match status" value="1"/>
</dbReference>
<dbReference type="PANTHER" id="PTHR42945:SF9">
    <property type="entry name" value="HISTIDINE BIOSYNTHESIS BIFUNCTIONAL PROTEIN HISIE"/>
    <property type="match status" value="1"/>
</dbReference>
<dbReference type="Pfam" id="PF01503">
    <property type="entry name" value="PRA-PH"/>
    <property type="match status" value="1"/>
</dbReference>
<dbReference type="SUPFAM" id="SSF101386">
    <property type="entry name" value="all-alpha NTP pyrophosphatases"/>
    <property type="match status" value="1"/>
</dbReference>
<sequence>MSDTLTRLAQVLEERKGAAADSSYVASLYHKGLNKILEKVGEESVETIIAAKDAAVSGDCSDVIYETADLWFHSMVMLAQLGQHPQAVLDELDRRFGLSGHVEKASRPSA</sequence>
<reference key="1">
    <citation type="journal article" date="2009" name="Genome Biol.">
        <title>Genomic and genetic analyses of diversity and plant interactions of Pseudomonas fluorescens.</title>
        <authorList>
            <person name="Silby M.W."/>
            <person name="Cerdeno-Tarraga A.M."/>
            <person name="Vernikos G.S."/>
            <person name="Giddens S.R."/>
            <person name="Jackson R.W."/>
            <person name="Preston G.M."/>
            <person name="Zhang X.-X."/>
            <person name="Moon C.D."/>
            <person name="Gehrig S.M."/>
            <person name="Godfrey S.A.C."/>
            <person name="Knight C.G."/>
            <person name="Malone J.G."/>
            <person name="Robinson Z."/>
            <person name="Spiers A.J."/>
            <person name="Harris S."/>
            <person name="Challis G.L."/>
            <person name="Yaxley A.M."/>
            <person name="Harris D."/>
            <person name="Seeger K."/>
            <person name="Murphy L."/>
            <person name="Rutter S."/>
            <person name="Squares R."/>
            <person name="Quail M.A."/>
            <person name="Saunders E."/>
            <person name="Mavromatis K."/>
            <person name="Brettin T.S."/>
            <person name="Bentley S.D."/>
            <person name="Hothersall J."/>
            <person name="Stephens E."/>
            <person name="Thomas C.M."/>
            <person name="Parkhill J."/>
            <person name="Levy S.B."/>
            <person name="Rainey P.B."/>
            <person name="Thomson N.R."/>
        </authorList>
    </citation>
    <scope>NUCLEOTIDE SEQUENCE [LARGE SCALE GENOMIC DNA]</scope>
    <source>
        <strain>Pf0-1</strain>
    </source>
</reference>
<protein>
    <recommendedName>
        <fullName evidence="1">Phosphoribosyl-ATP pyrophosphatase</fullName>
        <shortName evidence="1">PRA-PH</shortName>
        <ecNumber evidence="1">3.6.1.31</ecNumber>
    </recommendedName>
</protein>
<feature type="chain" id="PRO_0000230186" description="Phosphoribosyl-ATP pyrophosphatase">
    <location>
        <begin position="1"/>
        <end position="110"/>
    </location>
</feature>
<evidence type="ECO:0000255" key="1">
    <source>
        <dbReference type="HAMAP-Rule" id="MF_01020"/>
    </source>
</evidence>
<accession>Q3KJC9</accession>